<name>RPOB_CROS8</name>
<evidence type="ECO:0000255" key="1">
    <source>
        <dbReference type="HAMAP-Rule" id="MF_01321"/>
    </source>
</evidence>
<evidence type="ECO:0000305" key="2"/>
<comment type="function">
    <text evidence="1">DNA-dependent RNA polymerase catalyzes the transcription of DNA into RNA using the four ribonucleoside triphosphates as substrates.</text>
</comment>
<comment type="catalytic activity">
    <reaction evidence="1">
        <text>RNA(n) + a ribonucleoside 5'-triphosphate = RNA(n+1) + diphosphate</text>
        <dbReference type="Rhea" id="RHEA:21248"/>
        <dbReference type="Rhea" id="RHEA-COMP:14527"/>
        <dbReference type="Rhea" id="RHEA-COMP:17342"/>
        <dbReference type="ChEBI" id="CHEBI:33019"/>
        <dbReference type="ChEBI" id="CHEBI:61557"/>
        <dbReference type="ChEBI" id="CHEBI:140395"/>
        <dbReference type="EC" id="2.7.7.6"/>
    </reaction>
</comment>
<comment type="subunit">
    <text evidence="1">The RNAP catalytic core consists of 2 alpha, 1 beta, 1 beta' and 1 omega subunit. When a sigma factor is associated with the core the holoenzyme is formed, which can initiate transcription.</text>
</comment>
<comment type="similarity">
    <text evidence="1">Belongs to the RNA polymerase beta chain family.</text>
</comment>
<comment type="sequence caution" evidence="2">
    <conflict type="erroneous initiation">
        <sequence resource="EMBL-CDS" id="ABU78894"/>
    </conflict>
</comment>
<protein>
    <recommendedName>
        <fullName evidence="1">DNA-directed RNA polymerase subunit beta</fullName>
        <shortName evidence="1">RNAP subunit beta</shortName>
        <ecNumber evidence="1">2.7.7.6</ecNumber>
    </recommendedName>
    <alternativeName>
        <fullName evidence="1">RNA polymerase subunit beta</fullName>
    </alternativeName>
    <alternativeName>
        <fullName evidence="1">Transcriptase subunit beta</fullName>
    </alternativeName>
</protein>
<reference key="1">
    <citation type="journal article" date="2010" name="PLoS ONE">
        <title>Genome sequence of Cronobacter sakazakii BAA-894 and comparative genomic hybridization analysis with other Cronobacter species.</title>
        <authorList>
            <person name="Kucerova E."/>
            <person name="Clifton S.W."/>
            <person name="Xia X.Q."/>
            <person name="Long F."/>
            <person name="Porwollik S."/>
            <person name="Fulton L."/>
            <person name="Fronick C."/>
            <person name="Minx P."/>
            <person name="Kyung K."/>
            <person name="Warren W."/>
            <person name="Fulton R."/>
            <person name="Feng D."/>
            <person name="Wollam A."/>
            <person name="Shah N."/>
            <person name="Bhonagiri V."/>
            <person name="Nash W.E."/>
            <person name="Hallsworth-Pepin K."/>
            <person name="Wilson R.K."/>
            <person name="McClelland M."/>
            <person name="Forsythe S.J."/>
        </authorList>
    </citation>
    <scope>NUCLEOTIDE SEQUENCE [LARGE SCALE GENOMIC DNA]</scope>
    <source>
        <strain>ATCC BAA-894</strain>
    </source>
</reference>
<sequence>MVYSYTEKKRIRKDFGKRPQVLDVPYLLSIQLDSFQKFIEQDPEGQYGLEAAFRSVFPIQSYSGNSELQYVSYRLGEPVFDVKECQIRGVTYSAPLRVKLRLVIYEREAPEGTVKDIKEQEVYMGEIPLMTDNGTFVINGTERVIVSQLHRSPGVFFDSDKGKTHSSGKVLYNARIIPYRGSWLDFEFDPKDNLFVRIDRRRKLPATIILRALDYTTEQILDLFFEKVVFEIRDNKLQMELIPERLRGETASFDIEANGKIYVEKGRRITARHIRQLEKDEIKHIEVPVEYIAGKVAAKDYVDASTGELICPANMELSLDLLAKLSQSGHKRIETLFTNDLDHGPYISETVRVDPTTDRLSALVEIYRMMRPGEPPTREAAESLFENLFFSEDRYDLSAVGRMKFNRSLLRDEIEGSGILSKADIIDVMKKLIDIRNGKGEVDDIDHLGNRRIRSVGEMAENQFRVGLVRVERAVKERLSLGDLDTLMPQDMINAKPISAAVKEFFGSSQLSQFMDQNNPLSEITHKRRISALGPGGLTRERAGFEVRDVHPTHYGRVCPIETPEGPNIGLINSLSVYAQTNEYGFLETPYRKVTDGVVTDEIHYLSAIEEGNYVIAQANTNLTEEGRFADDLVTCRSKGESSLFSADQVDYMDVSTQQVVSVGASLIPFLEHDDANRALMGANMQRQAVPTLRADKPLVGTGMERAVAVDSGVTAVAKRGGIVQYVDASRIVIKVNEDEMYPGEAGIDIYNLTKYTRSNQNTCINQMPCVSLNEPVERGDVLADGPSTDLGELALGQNMRVAFMPWNGYNFEDSILVSERVVQEDRFTTIHIQELACVSRDTKLGPEEITADIPNVGEAALSKLDESGIVYIGAEVTGGDILVGKVTPKGETQLTPEEKLLRAIFGEKASDVKDSSLRVPNGVSGTVIDVQVFTRDGVEKDKRALEIEEMQLKQAKKDLSEELQILEAGLFSRIRAVLIAGGVEAEKLDKLPRDRWLELGLTDEEKQNQLEQLAEQYDELKHEFEKKLEAKRRKITQGDDLAPGVLKIVKVYLAVKRQIQPGDKMAGRHGNKGVISKINPIEDMPYDENGTPVDIVLNPLGVPSRMNIGQILETHLGMAAKGIGDKINAMLKRQEEVAKLREFIQKAYDLGQDVRQKVDLNTFSDDEVLRLAENLRKGMPLATPVFDGAKEAEIKELLQLGDLPTSGQITLFDGRTGEQFERPVTVGYMYMLKLNHLVDDKMHARSTGSYSLVTQQPLGGKAQFGGQRFGEMEVWALEAYGAAYTLQEMLTVKSDDVNGRTKMYKNIVDGNHQMEPGMPESFNVLLKEIRSLGINIELEDE</sequence>
<keyword id="KW-0240">DNA-directed RNA polymerase</keyword>
<keyword id="KW-0548">Nucleotidyltransferase</keyword>
<keyword id="KW-1185">Reference proteome</keyword>
<keyword id="KW-0804">Transcription</keyword>
<keyword id="KW-0808">Transferase</keyword>
<gene>
    <name evidence="1" type="primary">rpoB</name>
    <name type="ordered locus">ESA_03690</name>
</gene>
<dbReference type="EC" id="2.7.7.6" evidence="1"/>
<dbReference type="EMBL" id="CP000783">
    <property type="protein sequence ID" value="ABU78894.1"/>
    <property type="status" value="ALT_INIT"/>
    <property type="molecule type" value="Genomic_DNA"/>
</dbReference>
<dbReference type="RefSeq" id="WP_004387078.1">
    <property type="nucleotide sequence ID" value="NC_009778.1"/>
</dbReference>
<dbReference type="SMR" id="A7MQQ9"/>
<dbReference type="GeneID" id="56732343"/>
<dbReference type="KEGG" id="esa:ESA_03690"/>
<dbReference type="HOGENOM" id="CLU_000524_4_0_6"/>
<dbReference type="Proteomes" id="UP000000260">
    <property type="component" value="Chromosome"/>
</dbReference>
<dbReference type="GO" id="GO:0000428">
    <property type="term" value="C:DNA-directed RNA polymerase complex"/>
    <property type="evidence" value="ECO:0007669"/>
    <property type="project" value="UniProtKB-KW"/>
</dbReference>
<dbReference type="GO" id="GO:0003677">
    <property type="term" value="F:DNA binding"/>
    <property type="evidence" value="ECO:0007669"/>
    <property type="project" value="UniProtKB-UniRule"/>
</dbReference>
<dbReference type="GO" id="GO:0003899">
    <property type="term" value="F:DNA-directed RNA polymerase activity"/>
    <property type="evidence" value="ECO:0007669"/>
    <property type="project" value="UniProtKB-UniRule"/>
</dbReference>
<dbReference type="GO" id="GO:0032549">
    <property type="term" value="F:ribonucleoside binding"/>
    <property type="evidence" value="ECO:0007669"/>
    <property type="project" value="InterPro"/>
</dbReference>
<dbReference type="GO" id="GO:0006351">
    <property type="term" value="P:DNA-templated transcription"/>
    <property type="evidence" value="ECO:0007669"/>
    <property type="project" value="UniProtKB-UniRule"/>
</dbReference>
<dbReference type="CDD" id="cd00653">
    <property type="entry name" value="RNA_pol_B_RPB2"/>
    <property type="match status" value="1"/>
</dbReference>
<dbReference type="FunFam" id="2.30.150.10:FF:000001">
    <property type="entry name" value="DNA-directed RNA polymerase subunit beta"/>
    <property type="match status" value="1"/>
</dbReference>
<dbReference type="FunFam" id="2.40.270.10:FF:000003">
    <property type="entry name" value="DNA-directed RNA polymerase subunit beta"/>
    <property type="match status" value="1"/>
</dbReference>
<dbReference type="FunFam" id="2.40.270.10:FF:000004">
    <property type="entry name" value="DNA-directed RNA polymerase subunit beta"/>
    <property type="match status" value="1"/>
</dbReference>
<dbReference type="FunFam" id="2.40.50.100:FF:000006">
    <property type="entry name" value="DNA-directed RNA polymerase subunit beta"/>
    <property type="match status" value="1"/>
</dbReference>
<dbReference type="FunFam" id="2.40.50.150:FF:000001">
    <property type="entry name" value="DNA-directed RNA polymerase subunit beta"/>
    <property type="match status" value="1"/>
</dbReference>
<dbReference type="FunFam" id="3.90.1100.10:FF:000002">
    <property type="entry name" value="DNA-directed RNA polymerase subunit beta"/>
    <property type="match status" value="1"/>
</dbReference>
<dbReference type="FunFam" id="3.90.1110.10:FF:000001">
    <property type="entry name" value="DNA-directed RNA polymerase subunit beta"/>
    <property type="match status" value="1"/>
</dbReference>
<dbReference type="FunFam" id="3.90.1110.10:FF:000004">
    <property type="entry name" value="DNA-directed RNA polymerase subunit beta"/>
    <property type="match status" value="1"/>
</dbReference>
<dbReference type="FunFam" id="3.90.1800.10:FF:000001">
    <property type="entry name" value="DNA-directed RNA polymerase subunit beta"/>
    <property type="match status" value="1"/>
</dbReference>
<dbReference type="Gene3D" id="2.40.50.100">
    <property type="match status" value="1"/>
</dbReference>
<dbReference type="Gene3D" id="2.40.50.150">
    <property type="match status" value="1"/>
</dbReference>
<dbReference type="Gene3D" id="3.90.1100.10">
    <property type="match status" value="2"/>
</dbReference>
<dbReference type="Gene3D" id="2.30.150.10">
    <property type="entry name" value="DNA-directed RNA polymerase, beta subunit, external 1 domain"/>
    <property type="match status" value="1"/>
</dbReference>
<dbReference type="Gene3D" id="2.40.270.10">
    <property type="entry name" value="DNA-directed RNA polymerase, subunit 2, domain 6"/>
    <property type="match status" value="2"/>
</dbReference>
<dbReference type="Gene3D" id="3.90.1800.10">
    <property type="entry name" value="RNA polymerase alpha subunit dimerisation domain"/>
    <property type="match status" value="1"/>
</dbReference>
<dbReference type="Gene3D" id="3.90.1110.10">
    <property type="entry name" value="RNA polymerase Rpb2, domain 2"/>
    <property type="match status" value="2"/>
</dbReference>
<dbReference type="HAMAP" id="MF_01321">
    <property type="entry name" value="RNApol_bact_RpoB"/>
    <property type="match status" value="1"/>
</dbReference>
<dbReference type="InterPro" id="IPR042107">
    <property type="entry name" value="DNA-dir_RNA_pol_bsu_ext_1_sf"/>
</dbReference>
<dbReference type="InterPro" id="IPR019462">
    <property type="entry name" value="DNA-dir_RNA_pol_bsu_external_1"/>
</dbReference>
<dbReference type="InterPro" id="IPR015712">
    <property type="entry name" value="DNA-dir_RNA_pol_su2"/>
</dbReference>
<dbReference type="InterPro" id="IPR007120">
    <property type="entry name" value="DNA-dir_RNAP_su2_dom"/>
</dbReference>
<dbReference type="InterPro" id="IPR037033">
    <property type="entry name" value="DNA-dir_RNAP_su2_hyb_sf"/>
</dbReference>
<dbReference type="InterPro" id="IPR010243">
    <property type="entry name" value="RNA_pol_bsu_bac"/>
</dbReference>
<dbReference type="InterPro" id="IPR007121">
    <property type="entry name" value="RNA_pol_bsu_CS"/>
</dbReference>
<dbReference type="InterPro" id="IPR007644">
    <property type="entry name" value="RNA_pol_bsu_protrusion"/>
</dbReference>
<dbReference type="InterPro" id="IPR007642">
    <property type="entry name" value="RNA_pol_Rpb2_2"/>
</dbReference>
<dbReference type="InterPro" id="IPR037034">
    <property type="entry name" value="RNA_pol_Rpb2_2_sf"/>
</dbReference>
<dbReference type="InterPro" id="IPR007645">
    <property type="entry name" value="RNA_pol_Rpb2_3"/>
</dbReference>
<dbReference type="InterPro" id="IPR007641">
    <property type="entry name" value="RNA_pol_Rpb2_7"/>
</dbReference>
<dbReference type="InterPro" id="IPR014724">
    <property type="entry name" value="RNA_pol_RPB2_OB-fold"/>
</dbReference>
<dbReference type="NCBIfam" id="NF001616">
    <property type="entry name" value="PRK00405.1"/>
    <property type="match status" value="1"/>
</dbReference>
<dbReference type="NCBIfam" id="TIGR02013">
    <property type="entry name" value="rpoB"/>
    <property type="match status" value="1"/>
</dbReference>
<dbReference type="PANTHER" id="PTHR20856">
    <property type="entry name" value="DNA-DIRECTED RNA POLYMERASE I SUBUNIT 2"/>
    <property type="match status" value="1"/>
</dbReference>
<dbReference type="Pfam" id="PF04563">
    <property type="entry name" value="RNA_pol_Rpb2_1"/>
    <property type="match status" value="1"/>
</dbReference>
<dbReference type="Pfam" id="PF04561">
    <property type="entry name" value="RNA_pol_Rpb2_2"/>
    <property type="match status" value="2"/>
</dbReference>
<dbReference type="Pfam" id="PF04565">
    <property type="entry name" value="RNA_pol_Rpb2_3"/>
    <property type="match status" value="1"/>
</dbReference>
<dbReference type="Pfam" id="PF10385">
    <property type="entry name" value="RNA_pol_Rpb2_45"/>
    <property type="match status" value="1"/>
</dbReference>
<dbReference type="Pfam" id="PF00562">
    <property type="entry name" value="RNA_pol_Rpb2_6"/>
    <property type="match status" value="1"/>
</dbReference>
<dbReference type="Pfam" id="PF04560">
    <property type="entry name" value="RNA_pol_Rpb2_7"/>
    <property type="match status" value="1"/>
</dbReference>
<dbReference type="SUPFAM" id="SSF64484">
    <property type="entry name" value="beta and beta-prime subunits of DNA dependent RNA-polymerase"/>
    <property type="match status" value="1"/>
</dbReference>
<dbReference type="PROSITE" id="PS01166">
    <property type="entry name" value="RNA_POL_BETA"/>
    <property type="match status" value="1"/>
</dbReference>
<feature type="chain" id="PRO_0000329175" description="DNA-directed RNA polymerase subunit beta">
    <location>
        <begin position="1"/>
        <end position="1342"/>
    </location>
</feature>
<accession>A7MQQ9</accession>
<organism>
    <name type="scientific">Cronobacter sakazakii (strain ATCC BAA-894)</name>
    <name type="common">Enterobacter sakazakii</name>
    <dbReference type="NCBI Taxonomy" id="290339"/>
    <lineage>
        <taxon>Bacteria</taxon>
        <taxon>Pseudomonadati</taxon>
        <taxon>Pseudomonadota</taxon>
        <taxon>Gammaproteobacteria</taxon>
        <taxon>Enterobacterales</taxon>
        <taxon>Enterobacteriaceae</taxon>
        <taxon>Cronobacter</taxon>
    </lineage>
</organism>
<proteinExistence type="inferred from homology"/>